<comment type="function">
    <text evidence="1">Component of the dark-operative protochlorophyllide reductase (DPOR) that uses Mg-ATP and reduced ferredoxin to reduce ring D of protochlorophyllide (Pchlide) to form chlorophyllide a (Chlide). This reaction is light-independent. The NB-protein (ChlN-ChlB) is the catalytic component of the complex.</text>
</comment>
<comment type="catalytic activity">
    <reaction evidence="1">
        <text>chlorophyllide a + oxidized 2[4Fe-4S]-[ferredoxin] + 2 ADP + 2 phosphate = protochlorophyllide a + reduced 2[4Fe-4S]-[ferredoxin] + 2 ATP + 2 H2O</text>
        <dbReference type="Rhea" id="RHEA:28202"/>
        <dbReference type="Rhea" id="RHEA-COMP:10002"/>
        <dbReference type="Rhea" id="RHEA-COMP:10004"/>
        <dbReference type="ChEBI" id="CHEBI:15377"/>
        <dbReference type="ChEBI" id="CHEBI:30616"/>
        <dbReference type="ChEBI" id="CHEBI:33722"/>
        <dbReference type="ChEBI" id="CHEBI:33723"/>
        <dbReference type="ChEBI" id="CHEBI:43474"/>
        <dbReference type="ChEBI" id="CHEBI:83348"/>
        <dbReference type="ChEBI" id="CHEBI:83350"/>
        <dbReference type="ChEBI" id="CHEBI:456216"/>
        <dbReference type="EC" id="1.3.7.7"/>
    </reaction>
</comment>
<comment type="cofactor">
    <cofactor evidence="1">
        <name>[4Fe-4S] cluster</name>
        <dbReference type="ChEBI" id="CHEBI:49883"/>
    </cofactor>
    <text evidence="1">Binds 1 [4Fe-4S] cluster per heterodimer. The cluster is bound at the heterodimer interface by residues from both subunits.</text>
</comment>
<comment type="pathway">
    <text evidence="1">Porphyrin-containing compound metabolism; chlorophyll biosynthesis (light-independent).</text>
</comment>
<comment type="subunit">
    <text evidence="1">Protochlorophyllide reductase is composed of three subunits; ChlL, ChlN and ChlB. Forms a heterotetramer of two ChlB and two ChlN subunits.</text>
</comment>
<comment type="subcellular location">
    <subcellularLocation>
        <location>Plastid</location>
        <location>Chloroplast</location>
    </subcellularLocation>
</comment>
<comment type="RNA editing">
    <location>
        <position position="45" evidence="2"/>
    </location>
    <location>
        <position position="148" evidence="2"/>
    </location>
    <location>
        <position position="320" evidence="2"/>
    </location>
</comment>
<comment type="similarity">
    <text evidence="1">Belongs to the BchN/ChlN family.</text>
</comment>
<dbReference type="EC" id="1.3.7.7" evidence="1"/>
<dbReference type="EMBL" id="AY178864">
    <property type="protein sequence ID" value="AAP29450.2"/>
    <property type="molecule type" value="Genomic_DNA"/>
</dbReference>
<dbReference type="RefSeq" id="NP_848119.2">
    <property type="nucleotide sequence ID" value="NC_004766.1"/>
</dbReference>
<dbReference type="SMR" id="Q85FG6"/>
<dbReference type="GeneID" id="807452"/>
<dbReference type="UniPathway" id="UPA00670"/>
<dbReference type="GO" id="GO:0009507">
    <property type="term" value="C:chloroplast"/>
    <property type="evidence" value="ECO:0007669"/>
    <property type="project" value="UniProtKB-SubCell"/>
</dbReference>
<dbReference type="GO" id="GO:0051539">
    <property type="term" value="F:4 iron, 4 sulfur cluster binding"/>
    <property type="evidence" value="ECO:0007669"/>
    <property type="project" value="UniProtKB-UniRule"/>
</dbReference>
<dbReference type="GO" id="GO:0005524">
    <property type="term" value="F:ATP binding"/>
    <property type="evidence" value="ECO:0007669"/>
    <property type="project" value="UniProtKB-UniRule"/>
</dbReference>
<dbReference type="GO" id="GO:0046872">
    <property type="term" value="F:metal ion binding"/>
    <property type="evidence" value="ECO:0007669"/>
    <property type="project" value="UniProtKB-KW"/>
</dbReference>
<dbReference type="GO" id="GO:0016730">
    <property type="term" value="F:oxidoreductase activity, acting on iron-sulfur proteins as donors"/>
    <property type="evidence" value="ECO:0007669"/>
    <property type="project" value="InterPro"/>
</dbReference>
<dbReference type="GO" id="GO:0016636">
    <property type="term" value="F:oxidoreductase activity, acting on the CH-CH group of donors, iron-sulfur protein as acceptor"/>
    <property type="evidence" value="ECO:0007669"/>
    <property type="project" value="UniProtKB-UniRule"/>
</dbReference>
<dbReference type="GO" id="GO:0036068">
    <property type="term" value="P:light-independent chlorophyll biosynthetic process"/>
    <property type="evidence" value="ECO:0007669"/>
    <property type="project" value="UniProtKB-UniRule"/>
</dbReference>
<dbReference type="GO" id="GO:0019685">
    <property type="term" value="P:photosynthesis, dark reaction"/>
    <property type="evidence" value="ECO:0007669"/>
    <property type="project" value="InterPro"/>
</dbReference>
<dbReference type="CDD" id="cd01979">
    <property type="entry name" value="Pchlide_reductase_N"/>
    <property type="match status" value="1"/>
</dbReference>
<dbReference type="Gene3D" id="3.40.50.1980">
    <property type="entry name" value="Nitrogenase molybdenum iron protein domain"/>
    <property type="match status" value="3"/>
</dbReference>
<dbReference type="HAMAP" id="MF_00352">
    <property type="entry name" value="ChlN_BchN"/>
    <property type="match status" value="1"/>
</dbReference>
<dbReference type="InterPro" id="IPR050293">
    <property type="entry name" value="LIPOR_BchN/ChlN"/>
</dbReference>
<dbReference type="InterPro" id="IPR000510">
    <property type="entry name" value="Nase/OxRdtase_comp1"/>
</dbReference>
<dbReference type="InterPro" id="IPR005970">
    <property type="entry name" value="Protochl_reductN"/>
</dbReference>
<dbReference type="NCBIfam" id="TIGR01279">
    <property type="entry name" value="DPOR_bchN"/>
    <property type="match status" value="1"/>
</dbReference>
<dbReference type="NCBIfam" id="NF002768">
    <property type="entry name" value="PRK02842.1"/>
    <property type="match status" value="1"/>
</dbReference>
<dbReference type="PANTHER" id="PTHR39429">
    <property type="entry name" value="LIGHT-INDEPENDENT PROTOCHLOROPHYLLIDE REDUCTASE SUBUNIT N"/>
    <property type="match status" value="1"/>
</dbReference>
<dbReference type="PANTHER" id="PTHR39429:SF3">
    <property type="entry name" value="LIGHT-INDEPENDENT PROTOCHLOROPHYLLIDE REDUCTASE SUBUNIT N"/>
    <property type="match status" value="1"/>
</dbReference>
<dbReference type="Pfam" id="PF00148">
    <property type="entry name" value="Oxidored_nitro"/>
    <property type="match status" value="1"/>
</dbReference>
<dbReference type="PIRSF" id="PIRSF000162">
    <property type="entry name" value="P_chlorophyll_rd"/>
    <property type="match status" value="1"/>
</dbReference>
<dbReference type="SUPFAM" id="SSF53807">
    <property type="entry name" value="Helical backbone' metal receptor"/>
    <property type="match status" value="1"/>
</dbReference>
<gene>
    <name evidence="1" type="primary">chlN</name>
</gene>
<organism>
    <name type="scientific">Adiantum capillus-veneris</name>
    <name type="common">Maidenhair fern</name>
    <dbReference type="NCBI Taxonomy" id="13818"/>
    <lineage>
        <taxon>Eukaryota</taxon>
        <taxon>Viridiplantae</taxon>
        <taxon>Streptophyta</taxon>
        <taxon>Embryophyta</taxon>
        <taxon>Tracheophyta</taxon>
        <taxon>Polypodiopsida</taxon>
        <taxon>Polypodiidae</taxon>
        <taxon>Polypodiales</taxon>
        <taxon>Pteridineae</taxon>
        <taxon>Pteridaceae</taxon>
        <taxon>Vittarioideae</taxon>
        <taxon>Adiantum</taxon>
    </lineage>
</organism>
<geneLocation type="chloroplast"/>
<feature type="chain" id="PRO_0000208606" description="Light-independent protochlorophyllide reductase subunit N">
    <location>
        <begin position="1"/>
        <end position="460"/>
    </location>
</feature>
<feature type="binding site" evidence="1">
    <location>
        <position position="20"/>
    </location>
    <ligand>
        <name>[4Fe-4S] cluster</name>
        <dbReference type="ChEBI" id="CHEBI:49883"/>
        <note>ligand shared with heterodimeric partner</note>
    </ligand>
</feature>
<feature type="binding site" evidence="1">
    <location>
        <position position="45"/>
    </location>
    <ligand>
        <name>[4Fe-4S] cluster</name>
        <dbReference type="ChEBI" id="CHEBI:49883"/>
        <note>ligand shared with heterodimeric partner</note>
    </ligand>
</feature>
<feature type="binding site" evidence="1">
    <location>
        <position position="105"/>
    </location>
    <ligand>
        <name>[4Fe-4S] cluster</name>
        <dbReference type="ChEBI" id="CHEBI:49883"/>
        <note>ligand shared with heterodimeric partner</note>
    </ligand>
</feature>
<accession>Q85FG6</accession>
<evidence type="ECO:0000255" key="1">
    <source>
        <dbReference type="HAMAP-Rule" id="MF_00352"/>
    </source>
</evidence>
<evidence type="ECO:0000269" key="2">
    <source>
    </source>
</evidence>
<proteinExistence type="evidence at transcript level"/>
<protein>
    <recommendedName>
        <fullName evidence="1">Light-independent protochlorophyllide reductase subunit N</fullName>
        <shortName evidence="1">DPOR subunit N</shortName>
        <shortName evidence="1">LI-POR subunit N</shortName>
        <ecNumber evidence="1">1.3.7.7</ecNumber>
    </recommendedName>
</protein>
<name>CHLN_ADICA</name>
<reference key="1">
    <citation type="journal article" date="2003" name="DNA Res.">
        <title>Complete nucleotide sequence of the chloroplast genome from a leptosporangiate fern, Adiantum capillus-veneris L.</title>
        <authorList>
            <person name="Wolf P.G."/>
            <person name="Rowe C.A."/>
            <person name="Sinclair R.B."/>
            <person name="Hasebe M."/>
        </authorList>
    </citation>
    <scope>NUCLEOTIDE SEQUENCE [LARGE SCALE GENOMIC DNA]</scope>
</reference>
<reference key="2">
    <citation type="journal article" date="2004" name="Gene">
        <title>High levels of RNA editing in a vascular plant chloroplast genome: analysis of transcripts from the fern Adiantum capillus-veneris.</title>
        <authorList>
            <person name="Wolf P.G."/>
            <person name="Rowe C.A."/>
            <person name="Hasebe M."/>
        </authorList>
    </citation>
    <scope>NUCLEOTIDE SEQUENCE [GENOMIC DNA]</scope>
    <scope>RNA EDITING</scope>
    <source>
        <tissue>Frond</tissue>
    </source>
</reference>
<keyword id="KW-0004">4Fe-4S</keyword>
<keyword id="KW-0067">ATP-binding</keyword>
<keyword id="KW-0149">Chlorophyll biosynthesis</keyword>
<keyword id="KW-0150">Chloroplast</keyword>
<keyword id="KW-0408">Iron</keyword>
<keyword id="KW-0411">Iron-sulfur</keyword>
<keyword id="KW-0479">Metal-binding</keyword>
<keyword id="KW-0547">Nucleotide-binding</keyword>
<keyword id="KW-0560">Oxidoreductase</keyword>
<keyword id="KW-0602">Photosynthesis</keyword>
<keyword id="KW-0934">Plastid</keyword>
<keyword id="KW-0691">RNA editing</keyword>
<sequence>MKTPETLAFECETGNYHTFCPISCVAWLYQKIEDSFFLVVGTKTCGYFLQNALGVMIFAEPRYAMAELEEGDISAQLNDQKELEKICLQIRDDRNPSVIIWIGTCTTEIIKMDLEGIAPKLEKQIGIPIIVARANGLDYAFTQGEDTVLAAMAHRCPEYKHCTTNLKNRTDEMARIDNHTTNKSPFEASKLTRFNLVLFGSLSSSIASQLNLELKRQSISVSGWLPSQKYEELPGLGEGIYVCGVNPFLSRTATTLMRRRKCKLVGAPFPIGPDGTRAWIEKICSVFDIKSYGLENRESEIWENVKDYIQVINGKSVFFMGDNLLEISLARFLIRCGMIVYEVGIPYMDRRYQAAELLFLQHTCRKMKTPLPRIVEKPDNYGQIQRMHELKPHLAITGMAHANPLEARNIDTKWSVEFTFAQIHGFSSVRDILELVTRPLRRRGVITPGFRSLSKQTTGD</sequence>